<organism>
    <name type="scientific">Bacillus subtilis (strain 168)</name>
    <dbReference type="NCBI Taxonomy" id="224308"/>
    <lineage>
        <taxon>Bacteria</taxon>
        <taxon>Bacillati</taxon>
        <taxon>Bacillota</taxon>
        <taxon>Bacilli</taxon>
        <taxon>Bacillales</taxon>
        <taxon>Bacillaceae</taxon>
        <taxon>Bacillus</taxon>
    </lineage>
</organism>
<protein>
    <recommendedName>
        <fullName evidence="1">PTS system glucose-specific EIICBA component</fullName>
        <ecNumber evidence="10">2.7.1.199</ecNumber>
    </recommendedName>
    <alternativeName>
        <fullName evidence="8">EII-Glc/EIII-Glc</fullName>
    </alternativeName>
    <alternativeName>
        <fullName evidence="1">EIICBA-Glc</fullName>
    </alternativeName>
    <alternativeName>
        <fullName evidence="7">EIICBA-Glc 1</fullName>
    </alternativeName>
    <domain>
        <recommendedName>
            <fullName evidence="1">Glucose permease IIC component</fullName>
        </recommendedName>
        <alternativeName>
            <fullName evidence="1">PTS system glucose-specific EIIC component</fullName>
        </alternativeName>
    </domain>
    <domain>
        <recommendedName>
            <fullName evidence="1">Glucose-specific phosphotransferase enzyme IIB component</fullName>
        </recommendedName>
        <alternativeName>
            <fullName evidence="1">PTS system glucose-specific EIIB component</fullName>
        </alternativeName>
    </domain>
    <domain>
        <recommendedName>
            <fullName evidence="1">Glucose-specific phosphotransferase enzyme IIA component</fullName>
        </recommendedName>
        <alternativeName>
            <fullName evidence="1">PTS system glucose-specific EIIA component</fullName>
        </alternativeName>
    </domain>
</protein>
<keyword id="KW-0002">3D-structure</keyword>
<keyword id="KW-1003">Cell membrane</keyword>
<keyword id="KW-0418">Kinase</keyword>
<keyword id="KW-0472">Membrane</keyword>
<keyword id="KW-0598">Phosphotransferase system</keyword>
<keyword id="KW-1185">Reference proteome</keyword>
<keyword id="KW-0762">Sugar transport</keyword>
<keyword id="KW-0808">Transferase</keyword>
<keyword id="KW-0812">Transmembrane</keyword>
<keyword id="KW-1133">Transmembrane helix</keyword>
<keyword id="KW-0813">Transport</keyword>
<comment type="function">
    <text evidence="1 5 6">The phosphoenolpyruvate-dependent sugar phosphotransferase system (sugar PTS), a major carbohydrate active transport system, catalyzes the phosphorylation of incoming sugar substrates concomitantly with their translocation across the cell membrane (By similarity). This system is involved in glucose transport (PubMed:30038046). The system can also transport glucosamine (PubMed:23667565).</text>
</comment>
<comment type="function">
    <text evidence="6">In addition, plays an important role in the phosphorylation of EIIA-deficient PTS transporters (PubMed:30038046). The EIIA domain can transfer a phosphoryl group to EIIA-deficient PTS transporters, enabling growth with maltose, N-acetylglucosamine, sucrose or trehalose as the sole carbon source (PubMed:30038046).</text>
</comment>
<comment type="catalytic activity">
    <reaction evidence="10">
        <text>N(pros)-phospho-L-histidyl-[protein] + D-glucose(out) = D-glucose 6-phosphate(in) + L-histidyl-[protein]</text>
        <dbReference type="Rhea" id="RHEA:33367"/>
        <dbReference type="Rhea" id="RHEA-COMP:9745"/>
        <dbReference type="Rhea" id="RHEA-COMP:9746"/>
        <dbReference type="ChEBI" id="CHEBI:4167"/>
        <dbReference type="ChEBI" id="CHEBI:29979"/>
        <dbReference type="ChEBI" id="CHEBI:61548"/>
        <dbReference type="ChEBI" id="CHEBI:64837"/>
        <dbReference type="EC" id="2.7.1.199"/>
    </reaction>
</comment>
<comment type="catalytic activity">
    <reaction evidence="9">
        <text>D-glucosamine(out) + N(pros)-phospho-L-histidyl-[protein] = D-glucosamine 6-phosphate(in) + L-histidyl-[protein]</text>
        <dbReference type="Rhea" id="RHEA:37359"/>
        <dbReference type="Rhea" id="RHEA-COMP:9745"/>
        <dbReference type="Rhea" id="RHEA-COMP:9746"/>
        <dbReference type="ChEBI" id="CHEBI:29979"/>
        <dbReference type="ChEBI" id="CHEBI:58723"/>
        <dbReference type="ChEBI" id="CHEBI:58725"/>
        <dbReference type="ChEBI" id="CHEBI:64837"/>
    </reaction>
</comment>
<comment type="subcellular location">
    <subcellularLocation>
        <location evidence="4">Cell membrane</location>
        <topology evidence="4">Multi-pass membrane protein</topology>
    </subcellularLocation>
</comment>
<comment type="induction">
    <text evidence="5">Strongly induced by growth on glucose and glucosamine.</text>
</comment>
<comment type="domain">
    <text evidence="4">The EIIC domain type-1 forms the PTS system translocation channel and contains the specific substrate-binding site.</text>
</comment>
<comment type="domain">
    <text evidence="3">The PTS EIIB type-1 domain is phosphorylated by phospho-EIIA on a cysteinyl residue. Then, it transfers the phosphoryl group to the sugar substrate concomitantly with the sugar uptake processed by the PTS EIIC type-1 domain.</text>
</comment>
<comment type="domain">
    <text evidence="2">The PTS EIIA type-1 domain is phosphorylated by phospho-HPr on a histidyl residue. Then, it transfers the phosphoryl group to the PTS EIIB type-1 domain.</text>
</comment>
<comment type="disruption phenotype">
    <text evidence="5 6">Deletion of the gene reduces the growth rate on glucose but has no significant effect on growth on glucosamine (PubMed:23667565). The gamP-ptsG double mutant grows slower on glucosamine (PubMed:23667565). Deletion of the gene negatively influences the growth of the cells with maltose, N-acetylglucosamine, sucrose and trehalose (PubMed:30038046).</text>
</comment>
<accession>P20166</accession>
<accession>P08875</accession>
<evidence type="ECO:0000250" key="1">
    <source>
        <dbReference type="UniProtKB" id="Q57071"/>
    </source>
</evidence>
<evidence type="ECO:0000255" key="2">
    <source>
        <dbReference type="PROSITE-ProRule" id="PRU00416"/>
    </source>
</evidence>
<evidence type="ECO:0000255" key="3">
    <source>
        <dbReference type="PROSITE-ProRule" id="PRU00421"/>
    </source>
</evidence>
<evidence type="ECO:0000255" key="4">
    <source>
        <dbReference type="PROSITE-ProRule" id="PRU00426"/>
    </source>
</evidence>
<evidence type="ECO:0000269" key="5">
    <source>
    </source>
</evidence>
<evidence type="ECO:0000269" key="6">
    <source>
    </source>
</evidence>
<evidence type="ECO:0000305" key="7"/>
<evidence type="ECO:0000305" key="8">
    <source>
    </source>
</evidence>
<evidence type="ECO:0000305" key="9">
    <source>
    </source>
</evidence>
<evidence type="ECO:0000305" key="10">
    <source>
    </source>
</evidence>
<evidence type="ECO:0007744" key="11">
    <source>
        <dbReference type="PDB" id="1AX3"/>
    </source>
</evidence>
<evidence type="ECO:0007829" key="12">
    <source>
        <dbReference type="PDB" id="1AX3"/>
    </source>
</evidence>
<feature type="chain" id="PRO_0000186557" description="PTS system glucose-specific EIICBA component">
    <location>
        <begin position="1"/>
        <end position="699"/>
    </location>
</feature>
<feature type="transmembrane region" description="Helical" evidence="4">
    <location>
        <begin position="16"/>
        <end position="36"/>
    </location>
</feature>
<feature type="transmembrane region" description="Helical" evidence="4">
    <location>
        <begin position="66"/>
        <end position="86"/>
    </location>
</feature>
<feature type="transmembrane region" description="Helical" evidence="4">
    <location>
        <begin position="89"/>
        <end position="109"/>
    </location>
</feature>
<feature type="transmembrane region" description="Helical" evidence="4">
    <location>
        <begin position="139"/>
        <end position="159"/>
    </location>
</feature>
<feature type="transmembrane region" description="Helical" evidence="4">
    <location>
        <begin position="180"/>
        <end position="200"/>
    </location>
</feature>
<feature type="transmembrane region" description="Helical" evidence="4">
    <location>
        <begin position="233"/>
        <end position="253"/>
    </location>
</feature>
<feature type="transmembrane region" description="Helical" evidence="4">
    <location>
        <begin position="283"/>
        <end position="303"/>
    </location>
</feature>
<feature type="transmembrane region" description="Helical" evidence="4">
    <location>
        <begin position="313"/>
        <end position="333"/>
    </location>
</feature>
<feature type="transmembrane region" description="Helical" evidence="4">
    <location>
        <begin position="338"/>
        <end position="358"/>
    </location>
</feature>
<feature type="transmembrane region" description="Helical" evidence="4">
    <location>
        <begin position="365"/>
        <end position="385"/>
    </location>
</feature>
<feature type="transmembrane region" description="Helical" evidence="4">
    <location>
        <begin position="388"/>
        <end position="408"/>
    </location>
</feature>
<feature type="domain" description="PTS EIIC type-1" evidence="4">
    <location>
        <begin position="3"/>
        <end position="424"/>
    </location>
</feature>
<feature type="domain" description="PTS EIIB type-1" evidence="3">
    <location>
        <begin position="439"/>
        <end position="520"/>
    </location>
</feature>
<feature type="domain" description="PTS EIIA type-1" evidence="2">
    <location>
        <begin position="568"/>
        <end position="672"/>
    </location>
</feature>
<feature type="active site" description="Phosphocysteine intermediate; for EIIB activity" evidence="3">
    <location>
        <position position="461"/>
    </location>
</feature>
<feature type="active site" description="Tele-phosphohistidine intermediate; for EIIA activity" evidence="2">
    <location>
        <position position="620"/>
    </location>
</feature>
<feature type="strand" evidence="12">
    <location>
        <begin position="557"/>
        <end position="562"/>
    </location>
</feature>
<feature type="helix" evidence="12">
    <location>
        <begin position="563"/>
        <end position="565"/>
    </location>
</feature>
<feature type="strand" evidence="12">
    <location>
        <begin position="566"/>
        <end position="568"/>
    </location>
</feature>
<feature type="helix" evidence="12">
    <location>
        <begin position="569"/>
        <end position="572"/>
    </location>
</feature>
<feature type="strand" evidence="12">
    <location>
        <begin position="577"/>
        <end position="584"/>
    </location>
</feature>
<feature type="strand" evidence="12">
    <location>
        <begin position="586"/>
        <end position="592"/>
    </location>
</feature>
<feature type="strand" evidence="12">
    <location>
        <begin position="595"/>
        <end position="599"/>
    </location>
</feature>
<feature type="strand" evidence="12">
    <location>
        <begin position="602"/>
        <end position="614"/>
    </location>
</feature>
<feature type="strand" evidence="12">
    <location>
        <begin position="616"/>
        <end position="620"/>
    </location>
</feature>
<feature type="strand" evidence="12">
    <location>
        <begin position="622"/>
        <end position="624"/>
    </location>
</feature>
<feature type="turn" evidence="12">
    <location>
        <begin position="625"/>
        <end position="632"/>
    </location>
</feature>
<feature type="strand" evidence="12">
    <location>
        <begin position="633"/>
        <end position="636"/>
    </location>
</feature>
<feature type="strand" evidence="12">
    <location>
        <begin position="641"/>
        <end position="643"/>
    </location>
</feature>
<feature type="strand" evidence="12">
    <location>
        <begin position="645"/>
        <end position="652"/>
    </location>
</feature>
<feature type="helix" evidence="12">
    <location>
        <begin position="654"/>
        <end position="657"/>
    </location>
</feature>
<feature type="helix" evidence="12">
    <location>
        <begin position="658"/>
        <end position="660"/>
    </location>
</feature>
<feature type="strand" evidence="12">
    <location>
        <begin position="666"/>
        <end position="672"/>
    </location>
</feature>
<feature type="helix" evidence="12">
    <location>
        <begin position="673"/>
        <end position="675"/>
    </location>
</feature>
<feature type="strand" evidence="12">
    <location>
        <begin position="678"/>
        <end position="681"/>
    </location>
</feature>
<feature type="strand" evidence="12">
    <location>
        <begin position="685"/>
        <end position="687"/>
    </location>
</feature>
<feature type="strand" evidence="12">
    <location>
        <begin position="692"/>
        <end position="698"/>
    </location>
</feature>
<dbReference type="EC" id="2.7.1.199" evidence="10"/>
<dbReference type="EMBL" id="Z11744">
    <property type="protein sequence ID" value="CAA77803.1"/>
    <property type="molecule type" value="Genomic_DNA"/>
</dbReference>
<dbReference type="EMBL" id="AL009126">
    <property type="protein sequence ID" value="CAB13262.1"/>
    <property type="molecule type" value="Genomic_DNA"/>
</dbReference>
<dbReference type="EMBL" id="X12832">
    <property type="protein sequence ID" value="CAA31315.1"/>
    <property type="molecule type" value="Genomic_DNA"/>
</dbReference>
<dbReference type="EMBL" id="M60344">
    <property type="protein sequence ID" value="AAA22498.1"/>
    <property type="molecule type" value="Genomic_DNA"/>
</dbReference>
<dbReference type="PIR" id="S25083">
    <property type="entry name" value="WQBSGS"/>
</dbReference>
<dbReference type="RefSeq" id="NP_389272.1">
    <property type="nucleotide sequence ID" value="NC_000964.3"/>
</dbReference>
<dbReference type="RefSeq" id="WP_003244661.1">
    <property type="nucleotide sequence ID" value="NZ_OZ025638.1"/>
</dbReference>
<dbReference type="PDB" id="1AX3">
    <property type="method" value="NMR"/>
    <property type="chains" value="A=539-699"/>
</dbReference>
<dbReference type="PDB" id="1GPR">
    <property type="method" value="X-ray"/>
    <property type="resolution" value="1.90 A"/>
    <property type="chains" value="A=539-699"/>
</dbReference>
<dbReference type="PDBsum" id="1AX3"/>
<dbReference type="PDBsum" id="1GPR"/>
<dbReference type="BMRB" id="P20166"/>
<dbReference type="SMR" id="P20166"/>
<dbReference type="FunCoup" id="P20166">
    <property type="interactions" value="115"/>
</dbReference>
<dbReference type="STRING" id="224308.BSU13890"/>
<dbReference type="TCDB" id="4.A.1.1.9">
    <property type="family name" value="the pts glucose-glucoside (glc) family"/>
</dbReference>
<dbReference type="jPOST" id="P20166"/>
<dbReference type="PaxDb" id="224308-BSU13890"/>
<dbReference type="EnsemblBacteria" id="CAB13262">
    <property type="protein sequence ID" value="CAB13262"/>
    <property type="gene ID" value="BSU_13890"/>
</dbReference>
<dbReference type="GeneID" id="939255"/>
<dbReference type="KEGG" id="bsu:BSU13890"/>
<dbReference type="PATRIC" id="fig|224308.179.peg.1515"/>
<dbReference type="eggNOG" id="COG1263">
    <property type="taxonomic scope" value="Bacteria"/>
</dbReference>
<dbReference type="eggNOG" id="COG1264">
    <property type="taxonomic scope" value="Bacteria"/>
</dbReference>
<dbReference type="eggNOG" id="COG2190">
    <property type="taxonomic scope" value="Bacteria"/>
</dbReference>
<dbReference type="InParanoid" id="P20166"/>
<dbReference type="OrthoDB" id="9764327at2"/>
<dbReference type="PhylomeDB" id="P20166"/>
<dbReference type="BioCyc" id="BSUB:BSU13890-MONOMER"/>
<dbReference type="SABIO-RK" id="P20166"/>
<dbReference type="EvolutionaryTrace" id="P20166"/>
<dbReference type="Proteomes" id="UP000001570">
    <property type="component" value="Chromosome"/>
</dbReference>
<dbReference type="GO" id="GO:0005886">
    <property type="term" value="C:plasma membrane"/>
    <property type="evidence" value="ECO:0000318"/>
    <property type="project" value="GO_Central"/>
</dbReference>
<dbReference type="GO" id="GO:0055056">
    <property type="term" value="F:D-glucose transmembrane transporter activity"/>
    <property type="evidence" value="ECO:0007669"/>
    <property type="project" value="InterPro"/>
</dbReference>
<dbReference type="GO" id="GO:0016301">
    <property type="term" value="F:kinase activity"/>
    <property type="evidence" value="ECO:0007669"/>
    <property type="project" value="UniProtKB-KW"/>
</dbReference>
<dbReference type="GO" id="GO:0008982">
    <property type="term" value="F:protein-N(PI)-phosphohistidine-sugar phosphotransferase activity"/>
    <property type="evidence" value="ECO:0007669"/>
    <property type="project" value="InterPro"/>
</dbReference>
<dbReference type="GO" id="GO:0090563">
    <property type="term" value="F:protein-phosphocysteine-sugar phosphotransferase activity"/>
    <property type="evidence" value="ECO:0000318"/>
    <property type="project" value="GO_Central"/>
</dbReference>
<dbReference type="GO" id="GO:1904659">
    <property type="term" value="P:D-glucose transmembrane transport"/>
    <property type="evidence" value="ECO:0007669"/>
    <property type="project" value="InterPro"/>
</dbReference>
<dbReference type="GO" id="GO:0009401">
    <property type="term" value="P:phosphoenolpyruvate-dependent sugar phosphotransferase system"/>
    <property type="evidence" value="ECO:0000318"/>
    <property type="project" value="GO_Central"/>
</dbReference>
<dbReference type="CDD" id="cd00210">
    <property type="entry name" value="PTS_IIA_glc"/>
    <property type="match status" value="1"/>
</dbReference>
<dbReference type="CDD" id="cd00212">
    <property type="entry name" value="PTS_IIB_glc"/>
    <property type="match status" value="1"/>
</dbReference>
<dbReference type="FunFam" id="2.70.70.10:FF:000001">
    <property type="entry name" value="PTS system glucose-specific IIA component"/>
    <property type="match status" value="1"/>
</dbReference>
<dbReference type="FunFam" id="3.30.1360.60:FF:000001">
    <property type="entry name" value="PTS system glucose-specific IIBC component PtsG"/>
    <property type="match status" value="1"/>
</dbReference>
<dbReference type="Gene3D" id="2.70.70.10">
    <property type="entry name" value="Glucose Permease (Domain IIA)"/>
    <property type="match status" value="1"/>
</dbReference>
<dbReference type="Gene3D" id="3.30.1360.60">
    <property type="entry name" value="Glucose permease domain IIB"/>
    <property type="match status" value="1"/>
</dbReference>
<dbReference type="InterPro" id="IPR011055">
    <property type="entry name" value="Dup_hybrid_motif"/>
</dbReference>
<dbReference type="InterPro" id="IPR036878">
    <property type="entry name" value="Glu_permease_IIB"/>
</dbReference>
<dbReference type="InterPro" id="IPR018113">
    <property type="entry name" value="PTrfase_EIIB_Cys"/>
</dbReference>
<dbReference type="InterPro" id="IPR001127">
    <property type="entry name" value="PTS_EIIA_1_perm"/>
</dbReference>
<dbReference type="InterPro" id="IPR003352">
    <property type="entry name" value="PTS_EIIC"/>
</dbReference>
<dbReference type="InterPro" id="IPR013013">
    <property type="entry name" value="PTS_EIIC_1"/>
</dbReference>
<dbReference type="InterPro" id="IPR050429">
    <property type="entry name" value="PTS_Glucose_EIICBA"/>
</dbReference>
<dbReference type="InterPro" id="IPR001996">
    <property type="entry name" value="PTS_IIB_1"/>
</dbReference>
<dbReference type="InterPro" id="IPR011299">
    <property type="entry name" value="PTS_IIBC_glc"/>
</dbReference>
<dbReference type="InterPro" id="IPR004719">
    <property type="entry name" value="PTS_maltose/Glc_sub_IIC"/>
</dbReference>
<dbReference type="NCBIfam" id="TIGR00826">
    <property type="entry name" value="EIIB_glc"/>
    <property type="match status" value="1"/>
</dbReference>
<dbReference type="NCBIfam" id="TIGR00830">
    <property type="entry name" value="PTBA"/>
    <property type="match status" value="1"/>
</dbReference>
<dbReference type="NCBIfam" id="TIGR00852">
    <property type="entry name" value="pts-Glc"/>
    <property type="match status" value="1"/>
</dbReference>
<dbReference type="NCBIfam" id="TIGR02002">
    <property type="entry name" value="PTS-II-BC-glcB"/>
    <property type="match status" value="1"/>
</dbReference>
<dbReference type="PANTHER" id="PTHR30009">
    <property type="entry name" value="CYTOCHROME C-TYPE SYNTHESIS PROTEIN AND PTS TRANSMEMBRANE COMPONENT"/>
    <property type="match status" value="1"/>
</dbReference>
<dbReference type="PANTHER" id="PTHR30009:SF20">
    <property type="entry name" value="PTS SYSTEM GLUCOSE-SPECIFIC EIICB COMPONENT-RELATED"/>
    <property type="match status" value="1"/>
</dbReference>
<dbReference type="Pfam" id="PF00358">
    <property type="entry name" value="PTS_EIIA_1"/>
    <property type="match status" value="1"/>
</dbReference>
<dbReference type="Pfam" id="PF00367">
    <property type="entry name" value="PTS_EIIB"/>
    <property type="match status" value="1"/>
</dbReference>
<dbReference type="Pfam" id="PF02378">
    <property type="entry name" value="PTS_EIIC"/>
    <property type="match status" value="1"/>
</dbReference>
<dbReference type="SUPFAM" id="SSF51261">
    <property type="entry name" value="Duplicated hybrid motif"/>
    <property type="match status" value="1"/>
</dbReference>
<dbReference type="SUPFAM" id="SSF55604">
    <property type="entry name" value="Glucose permease domain IIB"/>
    <property type="match status" value="1"/>
</dbReference>
<dbReference type="PROSITE" id="PS51093">
    <property type="entry name" value="PTS_EIIA_TYPE_1"/>
    <property type="match status" value="1"/>
</dbReference>
<dbReference type="PROSITE" id="PS00371">
    <property type="entry name" value="PTS_EIIA_TYPE_1_HIS"/>
    <property type="match status" value="1"/>
</dbReference>
<dbReference type="PROSITE" id="PS51098">
    <property type="entry name" value="PTS_EIIB_TYPE_1"/>
    <property type="match status" value="1"/>
</dbReference>
<dbReference type="PROSITE" id="PS01035">
    <property type="entry name" value="PTS_EIIB_TYPE_1_CYS"/>
    <property type="match status" value="1"/>
</dbReference>
<dbReference type="PROSITE" id="PS51103">
    <property type="entry name" value="PTS_EIIC_TYPE_1"/>
    <property type="match status" value="1"/>
</dbReference>
<reference key="1">
    <citation type="journal article" date="1992" name="Mol. Gen. Genet.">
        <title>Cloning and nucleotide sequence of the ptsG gene of Bacillus subtilis.</title>
        <authorList>
            <person name="Zagorec M."/>
            <person name="Postma P.W."/>
        </authorList>
    </citation>
    <scope>NUCLEOTIDE SEQUENCE [GENOMIC DNA]</scope>
</reference>
<reference key="2">
    <citation type="journal article" date="1997" name="Nature">
        <title>The complete genome sequence of the Gram-positive bacterium Bacillus subtilis.</title>
        <authorList>
            <person name="Kunst F."/>
            <person name="Ogasawara N."/>
            <person name="Moszer I."/>
            <person name="Albertini A.M."/>
            <person name="Alloni G."/>
            <person name="Azevedo V."/>
            <person name="Bertero M.G."/>
            <person name="Bessieres P."/>
            <person name="Bolotin A."/>
            <person name="Borchert S."/>
            <person name="Borriss R."/>
            <person name="Boursier L."/>
            <person name="Brans A."/>
            <person name="Braun M."/>
            <person name="Brignell S.C."/>
            <person name="Bron S."/>
            <person name="Brouillet S."/>
            <person name="Bruschi C.V."/>
            <person name="Caldwell B."/>
            <person name="Capuano V."/>
            <person name="Carter N.M."/>
            <person name="Choi S.-K."/>
            <person name="Codani J.-J."/>
            <person name="Connerton I.F."/>
            <person name="Cummings N.J."/>
            <person name="Daniel R.A."/>
            <person name="Denizot F."/>
            <person name="Devine K.M."/>
            <person name="Duesterhoeft A."/>
            <person name="Ehrlich S.D."/>
            <person name="Emmerson P.T."/>
            <person name="Entian K.-D."/>
            <person name="Errington J."/>
            <person name="Fabret C."/>
            <person name="Ferrari E."/>
            <person name="Foulger D."/>
            <person name="Fritz C."/>
            <person name="Fujita M."/>
            <person name="Fujita Y."/>
            <person name="Fuma S."/>
            <person name="Galizzi A."/>
            <person name="Galleron N."/>
            <person name="Ghim S.-Y."/>
            <person name="Glaser P."/>
            <person name="Goffeau A."/>
            <person name="Golightly E.J."/>
            <person name="Grandi G."/>
            <person name="Guiseppi G."/>
            <person name="Guy B.J."/>
            <person name="Haga K."/>
            <person name="Haiech J."/>
            <person name="Harwood C.R."/>
            <person name="Henaut A."/>
            <person name="Hilbert H."/>
            <person name="Holsappel S."/>
            <person name="Hosono S."/>
            <person name="Hullo M.-F."/>
            <person name="Itaya M."/>
            <person name="Jones L.-M."/>
            <person name="Joris B."/>
            <person name="Karamata D."/>
            <person name="Kasahara Y."/>
            <person name="Klaerr-Blanchard M."/>
            <person name="Klein C."/>
            <person name="Kobayashi Y."/>
            <person name="Koetter P."/>
            <person name="Koningstein G."/>
            <person name="Krogh S."/>
            <person name="Kumano M."/>
            <person name="Kurita K."/>
            <person name="Lapidus A."/>
            <person name="Lardinois S."/>
            <person name="Lauber J."/>
            <person name="Lazarevic V."/>
            <person name="Lee S.-M."/>
            <person name="Levine A."/>
            <person name="Liu H."/>
            <person name="Masuda S."/>
            <person name="Mauel C."/>
            <person name="Medigue C."/>
            <person name="Medina N."/>
            <person name="Mellado R.P."/>
            <person name="Mizuno M."/>
            <person name="Moestl D."/>
            <person name="Nakai S."/>
            <person name="Noback M."/>
            <person name="Noone D."/>
            <person name="O'Reilly M."/>
            <person name="Ogawa K."/>
            <person name="Ogiwara A."/>
            <person name="Oudega B."/>
            <person name="Park S.-H."/>
            <person name="Parro V."/>
            <person name="Pohl T.M."/>
            <person name="Portetelle D."/>
            <person name="Porwollik S."/>
            <person name="Prescott A.M."/>
            <person name="Presecan E."/>
            <person name="Pujic P."/>
            <person name="Purnelle B."/>
            <person name="Rapoport G."/>
            <person name="Rey M."/>
            <person name="Reynolds S."/>
            <person name="Rieger M."/>
            <person name="Rivolta C."/>
            <person name="Rocha E."/>
            <person name="Roche B."/>
            <person name="Rose M."/>
            <person name="Sadaie Y."/>
            <person name="Sato T."/>
            <person name="Scanlan E."/>
            <person name="Schleich S."/>
            <person name="Schroeter R."/>
            <person name="Scoffone F."/>
            <person name="Sekiguchi J."/>
            <person name="Sekowska A."/>
            <person name="Seror S.J."/>
            <person name="Serror P."/>
            <person name="Shin B.-S."/>
            <person name="Soldo B."/>
            <person name="Sorokin A."/>
            <person name="Tacconi E."/>
            <person name="Takagi T."/>
            <person name="Takahashi H."/>
            <person name="Takemaru K."/>
            <person name="Takeuchi M."/>
            <person name="Tamakoshi A."/>
            <person name="Tanaka T."/>
            <person name="Terpstra P."/>
            <person name="Tognoni A."/>
            <person name="Tosato V."/>
            <person name="Uchiyama S."/>
            <person name="Vandenbol M."/>
            <person name="Vannier F."/>
            <person name="Vassarotti A."/>
            <person name="Viari A."/>
            <person name="Wambutt R."/>
            <person name="Wedler E."/>
            <person name="Wedler H."/>
            <person name="Weitzenegger T."/>
            <person name="Winters P."/>
            <person name="Wipat A."/>
            <person name="Yamamoto H."/>
            <person name="Yamane K."/>
            <person name="Yasumoto K."/>
            <person name="Yata K."/>
            <person name="Yoshida K."/>
            <person name="Yoshikawa H.-F."/>
            <person name="Zumstein E."/>
            <person name="Yoshikawa H."/>
            <person name="Danchin A."/>
        </authorList>
    </citation>
    <scope>NUCLEOTIDE SEQUENCE [LARGE SCALE GENOMIC DNA]</scope>
    <source>
        <strain>168</strain>
    </source>
</reference>
<reference key="3">
    <citation type="journal article" date="1989" name="Mol. Microbiol.">
        <title>Phosphoenolpyruvate:sugar phosphotransferase system of Bacillus subtilis: nucleotide sequence of ptsX, ptsH and the 5'-end of ptsI and evidence for a ptsHI operon.</title>
        <authorList>
            <person name="Gonzy-Treboul G."/>
            <person name="Zagorec M."/>
            <person name="Rain-Guion M.-C."/>
            <person name="Steinmetz M."/>
        </authorList>
    </citation>
    <scope>PRELIMINARY NUCLEOTIDE SEQUENCE [GENOMIC DNA] OF 361-699</scope>
    <source>
        <strain>168</strain>
    </source>
</reference>
<reference key="4">
    <citation type="journal article" date="1991" name="Mol. Microbiol.">
        <title>The glucose permease of the phosphotransferase system of Bacillus subtilis: evidence for IIGlc and IIIGlc domains.</title>
        <authorList>
            <person name="Gonzy-Treboul G."/>
            <person name="de Waard J.H."/>
            <person name="Zagorec M."/>
            <person name="Postma P.W."/>
        </authorList>
    </citation>
    <scope>SEQUENCE REVISION</scope>
</reference>
<reference key="5">
    <citation type="journal article" date="1990" name="J. Biol. Chem.">
        <title>The glucose permease of Bacillus subtilis is a single polypeptide chain that functions to energize the sucrose permease.</title>
        <authorList>
            <person name="Sutrina S.L."/>
            <person name="Reddy P."/>
            <person name="Saier M.H. Jr."/>
            <person name="Reizer J."/>
        </authorList>
    </citation>
    <scope>NUCLEOTIDE SEQUENCE [GENOMIC DNA] OF 483-558</scope>
</reference>
<reference key="6">
    <citation type="journal article" date="2013" name="PLoS ONE">
        <title>The use of amino sugars by Bacillus subtilis: presence of a unique operon for the catabolism of glucosamine.</title>
        <authorList>
            <person name="Gaugue I."/>
            <person name="Oberto J."/>
            <person name="Putzer H."/>
            <person name="Plumbridge J."/>
        </authorList>
    </citation>
    <scope>FUNCTION</scope>
    <scope>INDUCTION</scope>
    <scope>DISRUPTION PHENOTYPE</scope>
    <source>
        <strain>168</strain>
    </source>
</reference>
<reference key="7">
    <citation type="journal article" date="2018" name="J. Bacteriol.">
        <title>Cross talk among transporters of the phosphoenolpyruvate-dependent phosphotransferase system in Bacillus subtilis.</title>
        <authorList>
            <person name="Morabbi Heravi K."/>
            <person name="Altenbuchner J."/>
        </authorList>
    </citation>
    <scope>FUNCTION</scope>
    <scope>DISRUPTION PHENOTYPE</scope>
</reference>
<reference key="8">
    <citation type="journal article" date="1991" name="Biochemistry">
        <title>Structure of the IIA domain of the glucose permease of Bacillus subtilis at 2.2-A resolution.</title>
        <authorList>
            <person name="Liao D.-I."/>
            <person name="Kapadia G."/>
            <person name="Reddy P."/>
            <person name="Saier M.H. Jr."/>
            <person name="Reizer J."/>
            <person name="Herzberg O."/>
        </authorList>
    </citation>
    <scope>X-RAY CRYSTALLOGRAPHY (2.2 ANGSTROMS) OF EIIA DOMAIN</scope>
</reference>
<reference key="9">
    <citation type="journal article" date="1991" name="Biochemistry">
        <title>Polypeptide backbone resonance assignments and secondary structure of Bacillus subtilis enzyme IIIglc determined by two-dimensional and three-dimensional heteronuclear NMR spectroscopy.</title>
        <authorList>
            <person name="Fairbrother W.J."/>
            <person name="Cavanagh J."/>
            <person name="Dyson H.J."/>
            <person name="Plamer A.G. III"/>
            <person name="Sutrina S.L."/>
            <person name="Reizer J."/>
            <person name="Saier M.H. Jr."/>
            <person name="Wright P.E."/>
        </authorList>
    </citation>
    <scope>STRUCTURE BY NMR OF EIIA DOMAIN</scope>
</reference>
<reference evidence="11" key="10">
    <citation type="journal article" date="1998" name="Proteins">
        <title>High-resolution solution structure of Bacillus subtilis IIAglc.</title>
        <authorList>
            <person name="Chen Y."/>
            <person name="Case D.A."/>
            <person name="Reizer J."/>
            <person name="Saier M.H. Jr."/>
            <person name="Wright P.E."/>
        </authorList>
    </citation>
    <scope>STRUCTURE BY NMR OF EIAA DOMAIN</scope>
</reference>
<proteinExistence type="evidence at protein level"/>
<name>PTG3C_BACSU</name>
<sequence length="699" mass="75525">MFKALFGVLQKIGRALMLPVAILPAAGILLAIGNAMQNKDMIQVLHFLSNDNVQLVAGVMESAGQIVFDNLPLLFAVGVAIGLANGDGVAGIAAIIGYLVMNVSMSAVLLANGTIPSDSVERAKFFTENHPAYVNMLGIPTLATGVFGGIIVGVLAALLFNRFYTIELPQYLGFFAGKRFVPIVTSISALILGLIMLVIWPPIQHGLNAFSTGLVEANPTLAAFIFGVIERSLIPFGLHHIFYSPFWYEFFSYKSAAGEIIRGDQRIFMAQIKDGVQLTAGTFMTGKYPFMMFGLPAAALAIYHEAKPQNKKLVAGIMGSAALTSFLTGITEPLEFSFLFVAPVLFAIHCLFAGLSFMVMQLLNVKIGMTFSGGLIDYFLFGILPNRTAWWLVIPVGLGLAVIYYFGFRFAIRKFNLKTPGREDAAEETAAPGKTGEAGDLPYEILQAMGDQENIKHLDACITRLRVTVNDQKKVDKDRLKQLGASGVLEVGNNIQAIFGPRSDGLKTQMQDIIAGRKPRPEPKTSAQEEVGQQVEEVIAEPLQNEIGEEVFVSPITGEIHPITDVPDQVFSGKMMGDGFAILPSEGIVVSPVRGKILNVFPTKHAIGLQSDGGREILIHFGIDTVSLKGEGFTSFVSEGDRVEPGQKLLEVDLDAVKPNVPSLMTPIVFTNLAEGETVSIKASGSVNREQEDIVKIEK</sequence>
<gene>
    <name type="primary">ptsG</name>
    <name type="synonym">crr</name>
    <name type="synonym">ptsX</name>
    <name type="ordered locus">BSU13890</name>
</gene>